<comment type="function">
    <text>Core component of nucleosome. Nucleosomes wrap and compact DNA into chromatin, limiting DNA accessibility to the cellular machineries which require DNA as a template. Histones thereby play a central role in transcription regulation, DNA repair, DNA replication and chromosomal stability. DNA accessibility is regulated via a complex set of post-translational modifications of histones, also called histone code, and nucleosome remodeling.</text>
</comment>
<comment type="subunit">
    <text>The nucleosome is a histone octamer containing two molecules each of H2A, H2B, H3 and H4 assembled in one H3-H4 heterotetramer and two H2A-H2B heterodimers. The octamer wraps approximately 147 bp of DNA.</text>
</comment>
<comment type="subcellular location">
    <subcellularLocation>
        <location evidence="1">Nucleus</location>
    </subcellularLocation>
    <subcellularLocation>
        <location evidence="1">Chromosome</location>
    </subcellularLocation>
</comment>
<comment type="similarity">
    <text evidence="3">Belongs to the histone H3 family.</text>
</comment>
<proteinExistence type="inferred from homology"/>
<protein>
    <recommendedName>
        <fullName>Histone H3.2</fullName>
    </recommendedName>
</protein>
<reference key="1">
    <citation type="journal article" date="1990" name="Nucleic Acids Res.">
        <title>Characterization of the promoter region of Tetrahymena genes.</title>
        <authorList>
            <person name="Brunk C.F."/>
            <person name="Sadler L.A."/>
        </authorList>
    </citation>
    <scope>NUCLEOTIDE SEQUENCE [GENOMIC DNA]</scope>
</reference>
<reference key="2">
    <citation type="journal article" date="1990" name="J. Mol. Evol.">
        <title>Phylogenetic relationships among Tetrahymena species determined using the polymerase chain reaction.</title>
        <authorList>
            <person name="Brunk C.F."/>
            <person name="Kahn R.W."/>
            <person name="Sadler L.A."/>
        </authorList>
    </citation>
    <scope>NUCLEOTIDE SEQUENCE [GENOMIC DNA]</scope>
</reference>
<dbReference type="EMBL" id="X17133">
    <property type="protein sequence ID" value="CAA35000.1"/>
    <property type="molecule type" value="Genomic_DNA"/>
</dbReference>
<dbReference type="PIR" id="S10275">
    <property type="entry name" value="S10275"/>
</dbReference>
<dbReference type="GO" id="GO:0000786">
    <property type="term" value="C:nucleosome"/>
    <property type="evidence" value="ECO:0007669"/>
    <property type="project" value="UniProtKB-KW"/>
</dbReference>
<dbReference type="GO" id="GO:0005634">
    <property type="term" value="C:nucleus"/>
    <property type="evidence" value="ECO:0007669"/>
    <property type="project" value="UniProtKB-SubCell"/>
</dbReference>
<dbReference type="GO" id="GO:0003677">
    <property type="term" value="F:DNA binding"/>
    <property type="evidence" value="ECO:0007669"/>
    <property type="project" value="UniProtKB-KW"/>
</dbReference>
<dbReference type="GO" id="GO:0046982">
    <property type="term" value="F:protein heterodimerization activity"/>
    <property type="evidence" value="ECO:0007669"/>
    <property type="project" value="InterPro"/>
</dbReference>
<dbReference type="GO" id="GO:0030527">
    <property type="term" value="F:structural constituent of chromatin"/>
    <property type="evidence" value="ECO:0007669"/>
    <property type="project" value="InterPro"/>
</dbReference>
<dbReference type="Gene3D" id="1.10.20.10">
    <property type="entry name" value="Histone, subunit A"/>
    <property type="match status" value="1"/>
</dbReference>
<dbReference type="InterPro" id="IPR009072">
    <property type="entry name" value="Histone-fold"/>
</dbReference>
<dbReference type="InterPro" id="IPR000164">
    <property type="entry name" value="Histone_H3/CENP-A"/>
</dbReference>
<dbReference type="PANTHER" id="PTHR11426">
    <property type="entry name" value="HISTONE H3"/>
    <property type="match status" value="1"/>
</dbReference>
<dbReference type="PRINTS" id="PR00622">
    <property type="entry name" value="HISTONEH3"/>
</dbReference>
<dbReference type="SUPFAM" id="SSF47113">
    <property type="entry name" value="Histone-fold"/>
    <property type="match status" value="1"/>
</dbReference>
<dbReference type="PROSITE" id="PS00322">
    <property type="entry name" value="HISTONE_H3_1"/>
    <property type="match status" value="1"/>
</dbReference>
<organism>
    <name type="scientific">Tetrahymena hyperangularis</name>
    <dbReference type="NCBI Taxonomy" id="5899"/>
    <lineage>
        <taxon>Eukaryota</taxon>
        <taxon>Sar</taxon>
        <taxon>Alveolata</taxon>
        <taxon>Ciliophora</taxon>
        <taxon>Intramacronucleata</taxon>
        <taxon>Oligohymenophorea</taxon>
        <taxon>Hymenostomatida</taxon>
        <taxon>Tetrahymenina</taxon>
        <taxon>Tetrahymenidae</taxon>
        <taxon>Tetrahymena</taxon>
    </lineage>
</organism>
<accession>P69116</accession>
<accession>P17705</accession>
<sequence>MARTKQTARKSTGAKAPRKQLASKAARKSAPATGGIKKPHR</sequence>
<feature type="initiator methionine" description="Removed" evidence="1">
    <location>
        <position position="1"/>
    </location>
</feature>
<feature type="chain" id="PRO_0000221338" description="Histone H3.2">
    <location>
        <begin position="2"/>
        <end position="41" status="greater than"/>
    </location>
</feature>
<feature type="region of interest" description="Disordered" evidence="2">
    <location>
        <begin position="1"/>
        <end position="41"/>
    </location>
</feature>
<feature type="non-terminal residue">
    <location>
        <position position="41"/>
    </location>
</feature>
<keyword id="KW-0158">Chromosome</keyword>
<keyword id="KW-0238">DNA-binding</keyword>
<keyword id="KW-0544">Nucleosome core</keyword>
<keyword id="KW-0539">Nucleus</keyword>
<evidence type="ECO:0000250" key="1"/>
<evidence type="ECO:0000256" key="2">
    <source>
        <dbReference type="SAM" id="MobiDB-lite"/>
    </source>
</evidence>
<evidence type="ECO:0000305" key="3"/>
<name>H32_TETHY</name>